<evidence type="ECO:0000255" key="1">
    <source>
        <dbReference type="HAMAP-Rule" id="MF_00120"/>
    </source>
</evidence>
<proteinExistence type="inferred from homology"/>
<comment type="function">
    <text evidence="1">Allows the formation of correctly charged Gln-tRNA(Gln) through the transamidation of misacylated Glu-tRNA(Gln) in organisms which lack glutaminyl-tRNA synthetase. The reaction takes place in the presence of glutamine and ATP through an activated gamma-phospho-Glu-tRNA(Gln).</text>
</comment>
<comment type="catalytic activity">
    <reaction evidence="1">
        <text>L-glutamyl-tRNA(Gln) + L-glutamine + ATP + H2O = L-glutaminyl-tRNA(Gln) + L-glutamate + ADP + phosphate + H(+)</text>
        <dbReference type="Rhea" id="RHEA:17521"/>
        <dbReference type="Rhea" id="RHEA-COMP:9681"/>
        <dbReference type="Rhea" id="RHEA-COMP:9684"/>
        <dbReference type="ChEBI" id="CHEBI:15377"/>
        <dbReference type="ChEBI" id="CHEBI:15378"/>
        <dbReference type="ChEBI" id="CHEBI:29985"/>
        <dbReference type="ChEBI" id="CHEBI:30616"/>
        <dbReference type="ChEBI" id="CHEBI:43474"/>
        <dbReference type="ChEBI" id="CHEBI:58359"/>
        <dbReference type="ChEBI" id="CHEBI:78520"/>
        <dbReference type="ChEBI" id="CHEBI:78521"/>
        <dbReference type="ChEBI" id="CHEBI:456216"/>
        <dbReference type="EC" id="6.3.5.7"/>
    </reaction>
</comment>
<comment type="subunit">
    <text evidence="1">Heterotrimer of A, B and C subunits.</text>
</comment>
<comment type="similarity">
    <text evidence="1">Belongs to the amidase family. GatA subfamily.</text>
</comment>
<reference key="1">
    <citation type="journal article" date="2001" name="Science">
        <title>Comparative genomics of Listeria species.</title>
        <authorList>
            <person name="Glaser P."/>
            <person name="Frangeul L."/>
            <person name="Buchrieser C."/>
            <person name="Rusniok C."/>
            <person name="Amend A."/>
            <person name="Baquero F."/>
            <person name="Berche P."/>
            <person name="Bloecker H."/>
            <person name="Brandt P."/>
            <person name="Chakraborty T."/>
            <person name="Charbit A."/>
            <person name="Chetouani F."/>
            <person name="Couve E."/>
            <person name="de Daruvar A."/>
            <person name="Dehoux P."/>
            <person name="Domann E."/>
            <person name="Dominguez-Bernal G."/>
            <person name="Duchaud E."/>
            <person name="Durant L."/>
            <person name="Dussurget O."/>
            <person name="Entian K.-D."/>
            <person name="Fsihi H."/>
            <person name="Garcia-del Portillo F."/>
            <person name="Garrido P."/>
            <person name="Gautier L."/>
            <person name="Goebel W."/>
            <person name="Gomez-Lopez N."/>
            <person name="Hain T."/>
            <person name="Hauf J."/>
            <person name="Jackson D."/>
            <person name="Jones L.-M."/>
            <person name="Kaerst U."/>
            <person name="Kreft J."/>
            <person name="Kuhn M."/>
            <person name="Kunst F."/>
            <person name="Kurapkat G."/>
            <person name="Madueno E."/>
            <person name="Maitournam A."/>
            <person name="Mata Vicente J."/>
            <person name="Ng E."/>
            <person name="Nedjari H."/>
            <person name="Nordsiek G."/>
            <person name="Novella S."/>
            <person name="de Pablos B."/>
            <person name="Perez-Diaz J.-C."/>
            <person name="Purcell R."/>
            <person name="Remmel B."/>
            <person name="Rose M."/>
            <person name="Schlueter T."/>
            <person name="Simoes N."/>
            <person name="Tierrez A."/>
            <person name="Vazquez-Boland J.-A."/>
            <person name="Voss H."/>
            <person name="Wehland J."/>
            <person name="Cossart P."/>
        </authorList>
    </citation>
    <scope>NUCLEOTIDE SEQUENCE [LARGE SCALE GENOMIC DNA]</scope>
    <source>
        <strain>ATCC BAA-679 / EGD-e</strain>
    </source>
</reference>
<organism>
    <name type="scientific">Listeria monocytogenes serovar 1/2a (strain ATCC BAA-679 / EGD-e)</name>
    <dbReference type="NCBI Taxonomy" id="169963"/>
    <lineage>
        <taxon>Bacteria</taxon>
        <taxon>Bacillati</taxon>
        <taxon>Bacillota</taxon>
        <taxon>Bacilli</taxon>
        <taxon>Bacillales</taxon>
        <taxon>Listeriaceae</taxon>
        <taxon>Listeria</taxon>
    </lineage>
</organism>
<sequence length="483" mass="52352">MGLFDFSVKELHDKLVKKEISPFDLVSESFNRIESVEDKVGSFITLNKEAAFGVAEELGDAGIDPNNMLAGLPIGIKDNIVTKNLRTTAASKILENFDPIYDATVVSKLKNAQTINIGKLNMDEFAMGSSTETSYFHKTHNPWDLSRVPGGSSGGSASAVAAGEVLFSLGSDTGGSIRQPAAFCGVVGMKPTYGRVSRFGLIAFASSLDQIGPITKNVEDNAYLLEAISGLDANDSTSINQPVERFSDSLTGDIKGLRIGVPKEYLAEGVDPGVKQAVLDALKTLEKLGATWDEVSLPHSEYGVASYYILASSEASSNLSRFDGVRYGYRSPNATTLEELYTKTRSEGFGDEVKRRIMLGTYALSSGYYDAYYKKAQQARTLIKQDFINVFENYDVIIGPSSPTTAFKIDGMINDPITMYSNDILTVPINLAGVPAISVPCGFSDGLPVGLQIIGNYFEESLLYKVAHAFEQETTFHKEKPNL</sequence>
<dbReference type="EC" id="6.3.5.7" evidence="1"/>
<dbReference type="EMBL" id="AL591981">
    <property type="protein sequence ID" value="CAC99833.1"/>
    <property type="molecule type" value="Genomic_DNA"/>
</dbReference>
<dbReference type="PIR" id="AC1294">
    <property type="entry name" value="AC1294"/>
</dbReference>
<dbReference type="RefSeq" id="NP_465280.1">
    <property type="nucleotide sequence ID" value="NC_003210.1"/>
</dbReference>
<dbReference type="RefSeq" id="WP_003722232.1">
    <property type="nucleotide sequence ID" value="NZ_CP149495.1"/>
</dbReference>
<dbReference type="SMR" id="Q8Y6D2"/>
<dbReference type="STRING" id="169963.gene:17594437"/>
<dbReference type="PaxDb" id="169963-lmo1755"/>
<dbReference type="EnsemblBacteria" id="CAC99833">
    <property type="protein sequence ID" value="CAC99833"/>
    <property type="gene ID" value="CAC99833"/>
</dbReference>
<dbReference type="GeneID" id="985546"/>
<dbReference type="KEGG" id="lmo:lmo1755"/>
<dbReference type="PATRIC" id="fig|169963.11.peg.1799"/>
<dbReference type="eggNOG" id="COG0154">
    <property type="taxonomic scope" value="Bacteria"/>
</dbReference>
<dbReference type="HOGENOM" id="CLU_009600_0_3_9"/>
<dbReference type="OrthoDB" id="9811471at2"/>
<dbReference type="PhylomeDB" id="Q8Y6D2"/>
<dbReference type="BioCyc" id="LMON169963:LMO1755-MONOMER"/>
<dbReference type="Proteomes" id="UP000000817">
    <property type="component" value="Chromosome"/>
</dbReference>
<dbReference type="GO" id="GO:0030956">
    <property type="term" value="C:glutamyl-tRNA(Gln) amidotransferase complex"/>
    <property type="evidence" value="ECO:0007669"/>
    <property type="project" value="InterPro"/>
</dbReference>
<dbReference type="GO" id="GO:0005524">
    <property type="term" value="F:ATP binding"/>
    <property type="evidence" value="ECO:0007669"/>
    <property type="project" value="UniProtKB-KW"/>
</dbReference>
<dbReference type="GO" id="GO:0050567">
    <property type="term" value="F:glutaminyl-tRNA synthase (glutamine-hydrolyzing) activity"/>
    <property type="evidence" value="ECO:0007669"/>
    <property type="project" value="UniProtKB-UniRule"/>
</dbReference>
<dbReference type="GO" id="GO:0006412">
    <property type="term" value="P:translation"/>
    <property type="evidence" value="ECO:0007669"/>
    <property type="project" value="UniProtKB-UniRule"/>
</dbReference>
<dbReference type="Gene3D" id="3.90.1300.10">
    <property type="entry name" value="Amidase signature (AS) domain"/>
    <property type="match status" value="1"/>
</dbReference>
<dbReference type="HAMAP" id="MF_00120">
    <property type="entry name" value="GatA"/>
    <property type="match status" value="1"/>
</dbReference>
<dbReference type="InterPro" id="IPR000120">
    <property type="entry name" value="Amidase"/>
</dbReference>
<dbReference type="InterPro" id="IPR020556">
    <property type="entry name" value="Amidase_CS"/>
</dbReference>
<dbReference type="InterPro" id="IPR023631">
    <property type="entry name" value="Amidase_dom"/>
</dbReference>
<dbReference type="InterPro" id="IPR036928">
    <property type="entry name" value="AS_sf"/>
</dbReference>
<dbReference type="InterPro" id="IPR004412">
    <property type="entry name" value="GatA"/>
</dbReference>
<dbReference type="NCBIfam" id="TIGR00132">
    <property type="entry name" value="gatA"/>
    <property type="match status" value="1"/>
</dbReference>
<dbReference type="PANTHER" id="PTHR11895:SF151">
    <property type="entry name" value="GLUTAMYL-TRNA(GLN) AMIDOTRANSFERASE SUBUNIT A"/>
    <property type="match status" value="1"/>
</dbReference>
<dbReference type="PANTHER" id="PTHR11895">
    <property type="entry name" value="TRANSAMIDASE"/>
    <property type="match status" value="1"/>
</dbReference>
<dbReference type="Pfam" id="PF01425">
    <property type="entry name" value="Amidase"/>
    <property type="match status" value="1"/>
</dbReference>
<dbReference type="SUPFAM" id="SSF75304">
    <property type="entry name" value="Amidase signature (AS) enzymes"/>
    <property type="match status" value="1"/>
</dbReference>
<dbReference type="PROSITE" id="PS00571">
    <property type="entry name" value="AMIDASES"/>
    <property type="match status" value="1"/>
</dbReference>
<name>GATA_LISMO</name>
<accession>Q8Y6D2</accession>
<keyword id="KW-0067">ATP-binding</keyword>
<keyword id="KW-0436">Ligase</keyword>
<keyword id="KW-0547">Nucleotide-binding</keyword>
<keyword id="KW-0648">Protein biosynthesis</keyword>
<keyword id="KW-1185">Reference proteome</keyword>
<protein>
    <recommendedName>
        <fullName evidence="1">Glutamyl-tRNA(Gln) amidotransferase subunit A</fullName>
        <shortName evidence="1">Glu-ADT subunit A</shortName>
        <ecNumber evidence="1">6.3.5.7</ecNumber>
    </recommendedName>
</protein>
<gene>
    <name evidence="1" type="primary">gatA</name>
    <name type="ordered locus">lmo1755</name>
</gene>
<feature type="chain" id="PRO_0000105175" description="Glutamyl-tRNA(Gln) amidotransferase subunit A">
    <location>
        <begin position="1"/>
        <end position="483"/>
    </location>
</feature>
<feature type="active site" description="Charge relay system" evidence="1">
    <location>
        <position position="77"/>
    </location>
</feature>
<feature type="active site" description="Charge relay system" evidence="1">
    <location>
        <position position="152"/>
    </location>
</feature>
<feature type="active site" description="Acyl-ester intermediate" evidence="1">
    <location>
        <position position="176"/>
    </location>
</feature>